<dbReference type="EMBL" id="BC168969">
    <property type="protein sequence ID" value="AAI68969.1"/>
    <property type="status" value="ALT_INIT"/>
    <property type="molecule type" value="mRNA"/>
</dbReference>
<dbReference type="RefSeq" id="NP_001100393.2">
    <property type="nucleotide sequence ID" value="NM_001106923.2"/>
</dbReference>
<dbReference type="RefSeq" id="XP_008765448.1">
    <property type="nucleotide sequence ID" value="XM_008767226.2"/>
</dbReference>
<dbReference type="RefSeq" id="XP_017451863.1">
    <property type="nucleotide sequence ID" value="XM_017596374.1"/>
</dbReference>
<dbReference type="RefSeq" id="XP_017451864.1">
    <property type="nucleotide sequence ID" value="XM_017596375.1"/>
</dbReference>
<dbReference type="SMR" id="B5DF89"/>
<dbReference type="BioGRID" id="257002">
    <property type="interactions" value="3"/>
</dbReference>
<dbReference type="CORUM" id="B5DF89"/>
<dbReference type="FunCoup" id="B5DF89">
    <property type="interactions" value="4401"/>
</dbReference>
<dbReference type="IntAct" id="B5DF89">
    <property type="interactions" value="1"/>
</dbReference>
<dbReference type="STRING" id="10116.ENSRNOP00000021528"/>
<dbReference type="iPTMnet" id="B5DF89"/>
<dbReference type="PhosphoSitePlus" id="B5DF89"/>
<dbReference type="jPOST" id="B5DF89"/>
<dbReference type="PaxDb" id="10116-ENSRNOP00000021528"/>
<dbReference type="PeptideAtlas" id="B5DF89"/>
<dbReference type="GeneID" id="301555"/>
<dbReference type="UCSC" id="RGD:1308190">
    <property type="organism name" value="rat"/>
</dbReference>
<dbReference type="AGR" id="RGD:1308190"/>
<dbReference type="RGD" id="1308190">
    <property type="gene designation" value="Cul3"/>
</dbReference>
<dbReference type="eggNOG" id="KOG2166">
    <property type="taxonomic scope" value="Eukaryota"/>
</dbReference>
<dbReference type="InParanoid" id="B5DF89"/>
<dbReference type="OrthoDB" id="27073at2759"/>
<dbReference type="PhylomeDB" id="B5DF89"/>
<dbReference type="TreeFam" id="TF105858"/>
<dbReference type="Reactome" id="R-RNO-4641258">
    <property type="pathway name" value="Degradation of DVL"/>
</dbReference>
<dbReference type="Reactome" id="R-RNO-5632684">
    <property type="pathway name" value="Hedgehog 'on' state"/>
</dbReference>
<dbReference type="Reactome" id="R-RNO-5658442">
    <property type="pathway name" value="Regulation of RAS by GAPs"/>
</dbReference>
<dbReference type="Reactome" id="R-RNO-8951664">
    <property type="pathway name" value="Neddylation"/>
</dbReference>
<dbReference type="Reactome" id="R-RNO-9013418">
    <property type="pathway name" value="RHOBTB2 GTPase cycle"/>
</dbReference>
<dbReference type="Reactome" id="R-RNO-9013422">
    <property type="pathway name" value="RHOBTB1 GTPase cycle"/>
</dbReference>
<dbReference type="Reactome" id="R-RNO-9706019">
    <property type="pathway name" value="RHOBTB3 ATPase cycle"/>
</dbReference>
<dbReference type="Reactome" id="R-RNO-9755511">
    <property type="pathway name" value="KEAP1-NFE2L2 pathway"/>
</dbReference>
<dbReference type="Reactome" id="R-RNO-983168">
    <property type="pathway name" value="Antigen processing: Ubiquitination &amp; Proteasome degradation"/>
</dbReference>
<dbReference type="UniPathway" id="UPA00143"/>
<dbReference type="PRO" id="PR:B5DF89"/>
<dbReference type="Proteomes" id="UP000002494">
    <property type="component" value="Unplaced"/>
</dbReference>
<dbReference type="GO" id="GO:0005813">
    <property type="term" value="C:centrosome"/>
    <property type="evidence" value="ECO:0000250"/>
    <property type="project" value="UniProtKB"/>
</dbReference>
<dbReference type="GO" id="GO:0031463">
    <property type="term" value="C:Cul3-RING ubiquitin ligase complex"/>
    <property type="evidence" value="ECO:0000250"/>
    <property type="project" value="UniProtKB"/>
</dbReference>
<dbReference type="GO" id="GO:0005737">
    <property type="term" value="C:cytoplasm"/>
    <property type="evidence" value="ECO:0000250"/>
    <property type="project" value="UniProtKB"/>
</dbReference>
<dbReference type="GO" id="GO:0098978">
    <property type="term" value="C:glutamatergic synapse"/>
    <property type="evidence" value="ECO:0000266"/>
    <property type="project" value="RGD"/>
</dbReference>
<dbReference type="GO" id="GO:0005794">
    <property type="term" value="C:Golgi apparatus"/>
    <property type="evidence" value="ECO:0000266"/>
    <property type="project" value="RGD"/>
</dbReference>
<dbReference type="GO" id="GO:0072686">
    <property type="term" value="C:mitotic spindle"/>
    <property type="evidence" value="ECO:0000250"/>
    <property type="project" value="UniProtKB"/>
</dbReference>
<dbReference type="GO" id="GO:0005634">
    <property type="term" value="C:nucleus"/>
    <property type="evidence" value="ECO:0000250"/>
    <property type="project" value="UniProtKB"/>
</dbReference>
<dbReference type="GO" id="GO:0005886">
    <property type="term" value="C:plasma membrane"/>
    <property type="evidence" value="ECO:0000250"/>
    <property type="project" value="UniProtKB"/>
</dbReference>
<dbReference type="GO" id="GO:0005827">
    <property type="term" value="C:polar microtubule"/>
    <property type="evidence" value="ECO:0000266"/>
    <property type="project" value="RGD"/>
</dbReference>
<dbReference type="GO" id="GO:0098794">
    <property type="term" value="C:postsynapse"/>
    <property type="evidence" value="ECO:0007669"/>
    <property type="project" value="GOC"/>
</dbReference>
<dbReference type="GO" id="GO:0036126">
    <property type="term" value="C:sperm flagellum"/>
    <property type="evidence" value="ECO:0000250"/>
    <property type="project" value="UniProtKB"/>
</dbReference>
<dbReference type="GO" id="GO:0000922">
    <property type="term" value="C:spindle pole"/>
    <property type="evidence" value="ECO:0000250"/>
    <property type="project" value="UniProtKB"/>
</dbReference>
<dbReference type="GO" id="GO:0030332">
    <property type="term" value="F:cyclin binding"/>
    <property type="evidence" value="ECO:0000266"/>
    <property type="project" value="RGD"/>
</dbReference>
<dbReference type="GO" id="GO:0042802">
    <property type="term" value="F:identical protein binding"/>
    <property type="evidence" value="ECO:0000266"/>
    <property type="project" value="RGD"/>
</dbReference>
<dbReference type="GO" id="GO:0005112">
    <property type="term" value="F:Notch binding"/>
    <property type="evidence" value="ECO:0000266"/>
    <property type="project" value="RGD"/>
</dbReference>
<dbReference type="GO" id="GO:0031208">
    <property type="term" value="F:POZ domain binding"/>
    <property type="evidence" value="ECO:0000250"/>
    <property type="project" value="UniProtKB"/>
</dbReference>
<dbReference type="GO" id="GO:0160072">
    <property type="term" value="F:ubiquitin ligase complex scaffold activity"/>
    <property type="evidence" value="ECO:0000266"/>
    <property type="project" value="RGD"/>
</dbReference>
<dbReference type="GO" id="GO:0061630">
    <property type="term" value="F:ubiquitin protein ligase activity"/>
    <property type="evidence" value="ECO:0000266"/>
    <property type="project" value="RGD"/>
</dbReference>
<dbReference type="GO" id="GO:0031625">
    <property type="term" value="F:ubiquitin protein ligase binding"/>
    <property type="evidence" value="ECO:0000266"/>
    <property type="project" value="RGD"/>
</dbReference>
<dbReference type="GO" id="GO:0031145">
    <property type="term" value="P:anaphase-promoting complex-dependent catabolic process"/>
    <property type="evidence" value="ECO:0000266"/>
    <property type="project" value="RGD"/>
</dbReference>
<dbReference type="GO" id="GO:0016477">
    <property type="term" value="P:cell migration"/>
    <property type="evidence" value="ECO:0000266"/>
    <property type="project" value="RGD"/>
</dbReference>
<dbReference type="GO" id="GO:0000902">
    <property type="term" value="P:cell morphogenesis"/>
    <property type="evidence" value="ECO:0000266"/>
    <property type="project" value="RGD"/>
</dbReference>
<dbReference type="GO" id="GO:0030030">
    <property type="term" value="P:cell projection organization"/>
    <property type="evidence" value="ECO:0007669"/>
    <property type="project" value="UniProtKB-KW"/>
</dbReference>
<dbReference type="GO" id="GO:0071230">
    <property type="term" value="P:cellular response to amino acid stimulus"/>
    <property type="evidence" value="ECO:0000266"/>
    <property type="project" value="RGD"/>
</dbReference>
<dbReference type="GO" id="GO:0034599">
    <property type="term" value="P:cellular response to oxidative stress"/>
    <property type="evidence" value="ECO:0000266"/>
    <property type="project" value="RGD"/>
</dbReference>
<dbReference type="GO" id="GO:0048208">
    <property type="term" value="P:COPII vesicle coating"/>
    <property type="evidence" value="ECO:0000250"/>
    <property type="project" value="UniProtKB"/>
</dbReference>
<dbReference type="GO" id="GO:0040016">
    <property type="term" value="P:embryonic cleavage"/>
    <property type="evidence" value="ECO:0000250"/>
    <property type="project" value="UniProtKB"/>
</dbReference>
<dbReference type="GO" id="GO:0006888">
    <property type="term" value="P:endoplasmic reticulum to Golgi vesicle-mediated transport"/>
    <property type="evidence" value="ECO:0000250"/>
    <property type="project" value="UniProtKB"/>
</dbReference>
<dbReference type="GO" id="GO:0044346">
    <property type="term" value="P:fibroblast apoptotic process"/>
    <property type="evidence" value="ECO:0000266"/>
    <property type="project" value="RGD"/>
</dbReference>
<dbReference type="GO" id="GO:0007369">
    <property type="term" value="P:gastrulation"/>
    <property type="evidence" value="ECO:0000266"/>
    <property type="project" value="RGD"/>
</dbReference>
<dbReference type="GO" id="GO:0010467">
    <property type="term" value="P:gene expression"/>
    <property type="evidence" value="ECO:0000266"/>
    <property type="project" value="RGD"/>
</dbReference>
<dbReference type="GO" id="GO:0001701">
    <property type="term" value="P:in utero embryonic development"/>
    <property type="evidence" value="ECO:0000266"/>
    <property type="project" value="RGD"/>
</dbReference>
<dbReference type="GO" id="GO:0006954">
    <property type="term" value="P:inflammatory response"/>
    <property type="evidence" value="ECO:0000266"/>
    <property type="project" value="RGD"/>
</dbReference>
<dbReference type="GO" id="GO:0007229">
    <property type="term" value="P:integrin-mediated signaling pathway"/>
    <property type="evidence" value="ECO:0000250"/>
    <property type="project" value="UniProtKB"/>
</dbReference>
<dbReference type="GO" id="GO:0001822">
    <property type="term" value="P:kidney development"/>
    <property type="evidence" value="ECO:0007669"/>
    <property type="project" value="Ensembl"/>
</dbReference>
<dbReference type="GO" id="GO:0072576">
    <property type="term" value="P:liver morphogenesis"/>
    <property type="evidence" value="ECO:0000266"/>
    <property type="project" value="RGD"/>
</dbReference>
<dbReference type="GO" id="GO:0000278">
    <property type="term" value="P:mitotic cell cycle"/>
    <property type="evidence" value="ECO:0000266"/>
    <property type="project" value="RGD"/>
</dbReference>
<dbReference type="GO" id="GO:0007080">
    <property type="term" value="P:mitotic metaphase chromosome alignment"/>
    <property type="evidence" value="ECO:0000266"/>
    <property type="project" value="RGD"/>
</dbReference>
<dbReference type="GO" id="GO:0035024">
    <property type="term" value="P:negative regulation of Rho protein signal transduction"/>
    <property type="evidence" value="ECO:0000266"/>
    <property type="project" value="RGD"/>
</dbReference>
<dbReference type="GO" id="GO:0000122">
    <property type="term" value="P:negative regulation of transcription by RNA polymerase II"/>
    <property type="evidence" value="ECO:0000266"/>
    <property type="project" value="RGD"/>
</dbReference>
<dbReference type="GO" id="GO:0032480">
    <property type="term" value="P:negative regulation of type I interferon production"/>
    <property type="evidence" value="ECO:0000266"/>
    <property type="project" value="RGD"/>
</dbReference>
<dbReference type="GO" id="GO:0071630">
    <property type="term" value="P:nuclear protein quality control by the ubiquitin-proteasome system"/>
    <property type="evidence" value="ECO:0000250"/>
    <property type="project" value="UniProtKB"/>
</dbReference>
<dbReference type="GO" id="GO:0032467">
    <property type="term" value="P:positive regulation of cytokinesis"/>
    <property type="evidence" value="ECO:0000250"/>
    <property type="project" value="UniProtKB"/>
</dbReference>
<dbReference type="GO" id="GO:1901992">
    <property type="term" value="P:positive regulation of mitotic cell cycle phase transition"/>
    <property type="evidence" value="ECO:0000250"/>
    <property type="project" value="UniProtKB"/>
</dbReference>
<dbReference type="GO" id="GO:0045842">
    <property type="term" value="P:positive regulation of mitotic metaphase/anaphase transition"/>
    <property type="evidence" value="ECO:0000266"/>
    <property type="project" value="RGD"/>
</dbReference>
<dbReference type="GO" id="GO:0031398">
    <property type="term" value="P:positive regulation of protein ubiquitination"/>
    <property type="evidence" value="ECO:0000266"/>
    <property type="project" value="RGD"/>
</dbReference>
<dbReference type="GO" id="GO:1904263">
    <property type="term" value="P:positive regulation of TORC1 signaling"/>
    <property type="evidence" value="ECO:0000266"/>
    <property type="project" value="RGD"/>
</dbReference>
<dbReference type="GO" id="GO:0043161">
    <property type="term" value="P:proteasome-mediated ubiquitin-dependent protein catabolic process"/>
    <property type="evidence" value="ECO:0000250"/>
    <property type="project" value="UniProtKB"/>
</dbReference>
<dbReference type="GO" id="GO:0051865">
    <property type="term" value="P:protein autoubiquitination"/>
    <property type="evidence" value="ECO:0000266"/>
    <property type="project" value="RGD"/>
</dbReference>
<dbReference type="GO" id="GO:0030163">
    <property type="term" value="P:protein catabolic process"/>
    <property type="evidence" value="ECO:0000266"/>
    <property type="project" value="RGD"/>
</dbReference>
<dbReference type="GO" id="GO:0031648">
    <property type="term" value="P:protein destabilization"/>
    <property type="evidence" value="ECO:0000266"/>
    <property type="project" value="RGD"/>
</dbReference>
<dbReference type="GO" id="GO:0070936">
    <property type="term" value="P:protein K48-linked ubiquitination"/>
    <property type="evidence" value="ECO:0000250"/>
    <property type="project" value="UniProtKB"/>
</dbReference>
<dbReference type="GO" id="GO:0006513">
    <property type="term" value="P:protein monoubiquitination"/>
    <property type="evidence" value="ECO:0000250"/>
    <property type="project" value="UniProtKB"/>
</dbReference>
<dbReference type="GO" id="GO:0000209">
    <property type="term" value="P:protein polyubiquitination"/>
    <property type="evidence" value="ECO:0000250"/>
    <property type="project" value="UniProtKB"/>
</dbReference>
<dbReference type="GO" id="GO:0016567">
    <property type="term" value="P:protein ubiquitination"/>
    <property type="evidence" value="ECO:0000250"/>
    <property type="project" value="UniProtKB"/>
</dbReference>
<dbReference type="GO" id="GO:1900076">
    <property type="term" value="P:regulation of cellular response to insulin stimulus"/>
    <property type="evidence" value="ECO:0000266"/>
    <property type="project" value="RGD"/>
</dbReference>
<dbReference type="GO" id="GO:0006357">
    <property type="term" value="P:regulation of transcription by RNA polymerase II"/>
    <property type="evidence" value="ECO:0000266"/>
    <property type="project" value="RGD"/>
</dbReference>
<dbReference type="GO" id="GO:0140252">
    <property type="term" value="P:regulation protein catabolic process at postsynapse"/>
    <property type="evidence" value="ECO:0000266"/>
    <property type="project" value="RGD"/>
</dbReference>
<dbReference type="GO" id="GO:0017145">
    <property type="term" value="P:stem cell division"/>
    <property type="evidence" value="ECO:0000250"/>
    <property type="project" value="UniProtKB"/>
</dbReference>
<dbReference type="GO" id="GO:0043149">
    <property type="term" value="P:stress fiber assembly"/>
    <property type="evidence" value="ECO:0000266"/>
    <property type="project" value="RGD"/>
</dbReference>
<dbReference type="GO" id="GO:0001831">
    <property type="term" value="P:trophectodermal cellular morphogenesis"/>
    <property type="evidence" value="ECO:0000266"/>
    <property type="project" value="RGD"/>
</dbReference>
<dbReference type="GO" id="GO:0006511">
    <property type="term" value="P:ubiquitin-dependent protein catabolic process"/>
    <property type="evidence" value="ECO:0000250"/>
    <property type="project" value="UniProtKB"/>
</dbReference>
<dbReference type="GO" id="GO:0016055">
    <property type="term" value="P:Wnt signaling pathway"/>
    <property type="evidence" value="ECO:0000266"/>
    <property type="project" value="RGD"/>
</dbReference>
<dbReference type="FunFam" id="1.10.10.10:FF:000091">
    <property type="entry name" value="Cullin 3"/>
    <property type="match status" value="1"/>
</dbReference>
<dbReference type="FunFam" id="1.20.1310.10:FF:000001">
    <property type="entry name" value="Cullin 3"/>
    <property type="match status" value="1"/>
</dbReference>
<dbReference type="FunFam" id="1.20.1310.10:FF:000005">
    <property type="entry name" value="Cullin 3"/>
    <property type="match status" value="1"/>
</dbReference>
<dbReference type="FunFam" id="1.20.1310.10:FF:000006">
    <property type="entry name" value="Cullin 3"/>
    <property type="match status" value="1"/>
</dbReference>
<dbReference type="FunFam" id="1.20.1310.10:FF:000002">
    <property type="entry name" value="cullin-3 isoform X1"/>
    <property type="match status" value="1"/>
</dbReference>
<dbReference type="FunFam" id="3.30.230.130:FF:000002">
    <property type="entry name" value="cullin-3 isoform X1"/>
    <property type="match status" value="1"/>
</dbReference>
<dbReference type="Gene3D" id="1.20.1310.10">
    <property type="entry name" value="Cullin Repeats"/>
    <property type="match status" value="4"/>
</dbReference>
<dbReference type="Gene3D" id="3.30.230.130">
    <property type="entry name" value="Cullin, Chain C, Domain 2"/>
    <property type="match status" value="1"/>
</dbReference>
<dbReference type="Gene3D" id="1.10.10.10">
    <property type="entry name" value="Winged helix-like DNA-binding domain superfamily/Winged helix DNA-binding domain"/>
    <property type="match status" value="1"/>
</dbReference>
<dbReference type="InterPro" id="IPR045093">
    <property type="entry name" value="Cullin"/>
</dbReference>
<dbReference type="InterPro" id="IPR016157">
    <property type="entry name" value="Cullin_CS"/>
</dbReference>
<dbReference type="InterPro" id="IPR016158">
    <property type="entry name" value="Cullin_homology"/>
</dbReference>
<dbReference type="InterPro" id="IPR036317">
    <property type="entry name" value="Cullin_homology_sf"/>
</dbReference>
<dbReference type="InterPro" id="IPR001373">
    <property type="entry name" value="Cullin_N"/>
</dbReference>
<dbReference type="InterPro" id="IPR019559">
    <property type="entry name" value="Cullin_neddylation_domain"/>
</dbReference>
<dbReference type="InterPro" id="IPR016159">
    <property type="entry name" value="Cullin_repeat-like_dom_sf"/>
</dbReference>
<dbReference type="InterPro" id="IPR036388">
    <property type="entry name" value="WH-like_DNA-bd_sf"/>
</dbReference>
<dbReference type="InterPro" id="IPR036390">
    <property type="entry name" value="WH_DNA-bd_sf"/>
</dbReference>
<dbReference type="PANTHER" id="PTHR11932">
    <property type="entry name" value="CULLIN"/>
    <property type="match status" value="1"/>
</dbReference>
<dbReference type="Pfam" id="PF00888">
    <property type="entry name" value="Cullin"/>
    <property type="match status" value="1"/>
</dbReference>
<dbReference type="Pfam" id="PF10557">
    <property type="entry name" value="Cullin_Nedd8"/>
    <property type="match status" value="1"/>
</dbReference>
<dbReference type="SMART" id="SM00182">
    <property type="entry name" value="CULLIN"/>
    <property type="match status" value="1"/>
</dbReference>
<dbReference type="SMART" id="SM00884">
    <property type="entry name" value="Cullin_Nedd8"/>
    <property type="match status" value="1"/>
</dbReference>
<dbReference type="SUPFAM" id="SSF75632">
    <property type="entry name" value="Cullin homology domain"/>
    <property type="match status" value="1"/>
</dbReference>
<dbReference type="SUPFAM" id="SSF74788">
    <property type="entry name" value="Cullin repeat-like"/>
    <property type="match status" value="1"/>
</dbReference>
<dbReference type="SUPFAM" id="SSF46785">
    <property type="entry name" value="Winged helix' DNA-binding domain"/>
    <property type="match status" value="1"/>
</dbReference>
<dbReference type="PROSITE" id="PS01256">
    <property type="entry name" value="CULLIN_1"/>
    <property type="match status" value="1"/>
</dbReference>
<dbReference type="PROSITE" id="PS50069">
    <property type="entry name" value="CULLIN_2"/>
    <property type="match status" value="1"/>
</dbReference>
<feature type="initiator methionine" description="Removed" evidence="2">
    <location>
        <position position="1"/>
    </location>
</feature>
<feature type="chain" id="PRO_0000395993" description="Cullin-3">
    <location>
        <begin position="2"/>
        <end position="768"/>
    </location>
</feature>
<feature type="domain" description="Cullin neddylation" evidence="3">
    <location>
        <begin position="698"/>
        <end position="760"/>
    </location>
</feature>
<feature type="region of interest" description="Interaction with KLHL18" evidence="2">
    <location>
        <begin position="2"/>
        <end position="41"/>
    </location>
</feature>
<feature type="region of interest" description="Disordered" evidence="5">
    <location>
        <begin position="677"/>
        <end position="698"/>
    </location>
</feature>
<feature type="compositionally biased region" description="Basic and acidic residues" evidence="5">
    <location>
        <begin position="682"/>
        <end position="698"/>
    </location>
</feature>
<feature type="modified residue" description="N-acetylserine" evidence="2">
    <location>
        <position position="2"/>
    </location>
</feature>
<feature type="modified residue" description="Phosphoserine" evidence="2">
    <location>
        <position position="585"/>
    </location>
</feature>
<feature type="cross-link" description="Glycyl lysine isopeptide (Lys-Gly) (interchain with G-Cter in NEDD8)" evidence="1">
    <location>
        <position position="712"/>
    </location>
</feature>
<organism>
    <name type="scientific">Rattus norvegicus</name>
    <name type="common">Rat</name>
    <dbReference type="NCBI Taxonomy" id="10116"/>
    <lineage>
        <taxon>Eukaryota</taxon>
        <taxon>Metazoa</taxon>
        <taxon>Chordata</taxon>
        <taxon>Craniata</taxon>
        <taxon>Vertebrata</taxon>
        <taxon>Euteleostomi</taxon>
        <taxon>Mammalia</taxon>
        <taxon>Eutheria</taxon>
        <taxon>Euarchontoglires</taxon>
        <taxon>Glires</taxon>
        <taxon>Rodentia</taxon>
        <taxon>Myomorpha</taxon>
        <taxon>Muroidea</taxon>
        <taxon>Muridae</taxon>
        <taxon>Murinae</taxon>
        <taxon>Rattus</taxon>
    </lineage>
</organism>
<protein>
    <recommendedName>
        <fullName>Cullin-3</fullName>
    </recommendedName>
</protein>
<evidence type="ECO:0000250" key="1">
    <source>
        <dbReference type="UniProtKB" id="Q13616"/>
    </source>
</evidence>
<evidence type="ECO:0000250" key="2">
    <source>
        <dbReference type="UniProtKB" id="Q13618"/>
    </source>
</evidence>
<evidence type="ECO:0000255" key="3"/>
<evidence type="ECO:0000255" key="4">
    <source>
        <dbReference type="PROSITE-ProRule" id="PRU00330"/>
    </source>
</evidence>
<evidence type="ECO:0000256" key="5">
    <source>
        <dbReference type="SAM" id="MobiDB-lite"/>
    </source>
</evidence>
<evidence type="ECO:0000269" key="6">
    <source>
    </source>
</evidence>
<evidence type="ECO:0000305" key="7"/>
<name>CUL3_RAT</name>
<accession>B5DF89</accession>
<reference key="1">
    <citation type="journal article" date="2004" name="Nature">
        <title>Genome sequence of the Brown Norway rat yields insights into mammalian evolution.</title>
        <authorList>
            <person name="Gibbs R.A."/>
            <person name="Weinstock G.M."/>
            <person name="Metzker M.L."/>
            <person name="Muzny D.M."/>
            <person name="Sodergren E.J."/>
            <person name="Scherer S."/>
            <person name="Scott G."/>
            <person name="Steffen D."/>
            <person name="Worley K.C."/>
            <person name="Burch P.E."/>
            <person name="Okwuonu G."/>
            <person name="Hines S."/>
            <person name="Lewis L."/>
            <person name="Deramo C."/>
            <person name="Delgado O."/>
            <person name="Dugan-Rocha S."/>
            <person name="Miner G."/>
            <person name="Morgan M."/>
            <person name="Hawes A."/>
            <person name="Gill R."/>
            <person name="Holt R.A."/>
            <person name="Adams M.D."/>
            <person name="Amanatides P.G."/>
            <person name="Baden-Tillson H."/>
            <person name="Barnstead M."/>
            <person name="Chin S."/>
            <person name="Evans C.A."/>
            <person name="Ferriera S."/>
            <person name="Fosler C."/>
            <person name="Glodek A."/>
            <person name="Gu Z."/>
            <person name="Jennings D."/>
            <person name="Kraft C.L."/>
            <person name="Nguyen T."/>
            <person name="Pfannkoch C.M."/>
            <person name="Sitter C."/>
            <person name="Sutton G.G."/>
            <person name="Venter J.C."/>
            <person name="Woodage T."/>
            <person name="Smith D."/>
            <person name="Lee H.-M."/>
            <person name="Gustafson E."/>
            <person name="Cahill P."/>
            <person name="Kana A."/>
            <person name="Doucette-Stamm L."/>
            <person name="Weinstock K."/>
            <person name="Fechtel K."/>
            <person name="Weiss R.B."/>
            <person name="Dunn D.M."/>
            <person name="Green E.D."/>
            <person name="Blakesley R.W."/>
            <person name="Bouffard G.G."/>
            <person name="De Jong P.J."/>
            <person name="Osoegawa K."/>
            <person name="Zhu B."/>
            <person name="Marra M."/>
            <person name="Schein J."/>
            <person name="Bosdet I."/>
            <person name="Fjell C."/>
            <person name="Jones S."/>
            <person name="Krzywinski M."/>
            <person name="Mathewson C."/>
            <person name="Siddiqui A."/>
            <person name="Wye N."/>
            <person name="McPherson J."/>
            <person name="Zhao S."/>
            <person name="Fraser C.M."/>
            <person name="Shetty J."/>
            <person name="Shatsman S."/>
            <person name="Geer K."/>
            <person name="Chen Y."/>
            <person name="Abramzon S."/>
            <person name="Nierman W.C."/>
            <person name="Havlak P.H."/>
            <person name="Chen R."/>
            <person name="Durbin K.J."/>
            <person name="Egan A."/>
            <person name="Ren Y."/>
            <person name="Song X.-Z."/>
            <person name="Li B."/>
            <person name="Liu Y."/>
            <person name="Qin X."/>
            <person name="Cawley S."/>
            <person name="Cooney A.J."/>
            <person name="D'Souza L.M."/>
            <person name="Martin K."/>
            <person name="Wu J.Q."/>
            <person name="Gonzalez-Garay M.L."/>
            <person name="Jackson A.R."/>
            <person name="Kalafus K.J."/>
            <person name="McLeod M.P."/>
            <person name="Milosavljevic A."/>
            <person name="Virk D."/>
            <person name="Volkov A."/>
            <person name="Wheeler D.A."/>
            <person name="Zhang Z."/>
            <person name="Bailey J.A."/>
            <person name="Eichler E.E."/>
            <person name="Tuzun E."/>
            <person name="Birney E."/>
            <person name="Mongin E."/>
            <person name="Ureta-Vidal A."/>
            <person name="Woodwark C."/>
            <person name="Zdobnov E."/>
            <person name="Bork P."/>
            <person name="Suyama M."/>
            <person name="Torrents D."/>
            <person name="Alexandersson M."/>
            <person name="Trask B.J."/>
            <person name="Young J.M."/>
            <person name="Huang H."/>
            <person name="Wang H."/>
            <person name="Xing H."/>
            <person name="Daniels S."/>
            <person name="Gietzen D."/>
            <person name="Schmidt J."/>
            <person name="Stevens K."/>
            <person name="Vitt U."/>
            <person name="Wingrove J."/>
            <person name="Camara F."/>
            <person name="Mar Alba M."/>
            <person name="Abril J.F."/>
            <person name="Guigo R."/>
            <person name="Smit A."/>
            <person name="Dubchak I."/>
            <person name="Rubin E.M."/>
            <person name="Couronne O."/>
            <person name="Poliakov A."/>
            <person name="Huebner N."/>
            <person name="Ganten D."/>
            <person name="Goesele C."/>
            <person name="Hummel O."/>
            <person name="Kreitler T."/>
            <person name="Lee Y.-A."/>
            <person name="Monti J."/>
            <person name="Schulz H."/>
            <person name="Zimdahl H."/>
            <person name="Himmelbauer H."/>
            <person name="Lehrach H."/>
            <person name="Jacob H.J."/>
            <person name="Bromberg S."/>
            <person name="Gullings-Handley J."/>
            <person name="Jensen-Seaman M.I."/>
            <person name="Kwitek A.E."/>
            <person name="Lazar J."/>
            <person name="Pasko D."/>
            <person name="Tonellato P.J."/>
            <person name="Twigger S."/>
            <person name="Ponting C.P."/>
            <person name="Duarte J.M."/>
            <person name="Rice S."/>
            <person name="Goodstadt L."/>
            <person name="Beatson S.A."/>
            <person name="Emes R.D."/>
            <person name="Winter E.E."/>
            <person name="Webber C."/>
            <person name="Brandt P."/>
            <person name="Nyakatura G."/>
            <person name="Adetobi M."/>
            <person name="Chiaromonte F."/>
            <person name="Elnitski L."/>
            <person name="Eswara P."/>
            <person name="Hardison R.C."/>
            <person name="Hou M."/>
            <person name="Kolbe D."/>
            <person name="Makova K."/>
            <person name="Miller W."/>
            <person name="Nekrutenko A."/>
            <person name="Riemer C."/>
            <person name="Schwartz S."/>
            <person name="Taylor J."/>
            <person name="Yang S."/>
            <person name="Zhang Y."/>
            <person name="Lindpaintner K."/>
            <person name="Andrews T.D."/>
            <person name="Caccamo M."/>
            <person name="Clamp M."/>
            <person name="Clarke L."/>
            <person name="Curwen V."/>
            <person name="Durbin R.M."/>
            <person name="Eyras E."/>
            <person name="Searle S.M."/>
            <person name="Cooper G.M."/>
            <person name="Batzoglou S."/>
            <person name="Brudno M."/>
            <person name="Sidow A."/>
            <person name="Stone E.A."/>
            <person name="Payseur B.A."/>
            <person name="Bourque G."/>
            <person name="Lopez-Otin C."/>
            <person name="Puente X.S."/>
            <person name="Chakrabarti K."/>
            <person name="Chatterji S."/>
            <person name="Dewey C."/>
            <person name="Pachter L."/>
            <person name="Bray N."/>
            <person name="Yap V.B."/>
            <person name="Caspi A."/>
            <person name="Tesler G."/>
            <person name="Pevzner P.A."/>
            <person name="Haussler D."/>
            <person name="Roskin K.M."/>
            <person name="Baertsch R."/>
            <person name="Clawson H."/>
            <person name="Furey T.S."/>
            <person name="Hinrichs A.S."/>
            <person name="Karolchik D."/>
            <person name="Kent W.J."/>
            <person name="Rosenbloom K.R."/>
            <person name="Trumbower H."/>
            <person name="Weirauch M."/>
            <person name="Cooper D.N."/>
            <person name="Stenson P.D."/>
            <person name="Ma B."/>
            <person name="Brent M."/>
            <person name="Arumugam M."/>
            <person name="Shteynberg D."/>
            <person name="Copley R.R."/>
            <person name="Taylor M.S."/>
            <person name="Riethman H."/>
            <person name="Mudunuri U."/>
            <person name="Peterson J."/>
            <person name="Guyer M."/>
            <person name="Felsenfeld A."/>
            <person name="Old S."/>
            <person name="Mockrin S."/>
            <person name="Collins F.S."/>
        </authorList>
    </citation>
    <scope>NUCLEOTIDE SEQUENCE [LARGE SCALE GENOMIC DNA]</scope>
    <source>
        <strain>Brown Norway</strain>
    </source>
</reference>
<reference key="2">
    <citation type="journal article" date="2004" name="Genome Res.">
        <title>The status, quality, and expansion of the NIH full-length cDNA project: the Mammalian Gene Collection (MGC).</title>
        <authorList>
            <consortium name="The MGC Project Team"/>
        </authorList>
    </citation>
    <scope>NUCLEOTIDE SEQUENCE [LARGE SCALE MRNA] OF 20-768</scope>
    <source>
        <tissue>Lung</tissue>
    </source>
</reference>
<reference key="3">
    <citation type="journal article" date="2006" name="J. Biol. Chem.">
        <title>Actinfilin is a Cul3 substrate adaptor, linking GluR6 kainate receptor subunits to the ubiquitin-proteasome pathway.</title>
        <authorList>
            <person name="Salinas G.D."/>
            <person name="Blair L.A."/>
            <person name="Needleman L.A."/>
            <person name="Gonzales J.D."/>
            <person name="Chen Y."/>
            <person name="Li M."/>
            <person name="Singer J.D."/>
            <person name="Marshall J."/>
        </authorList>
    </citation>
    <scope>INTERACTION WITH KLHL17</scope>
</reference>
<proteinExistence type="evidence at protein level"/>
<sequence>MSNLSKGTGSRKDTKMRIRAFPMTMDEKYVNSIWDLLKNAIQEIQRKNNSGLSFEELYRNAYTMVLHKHGEKLYTGLREVVTEHLINKVREDVLNSLNNNFLQTLNQAWNDHQTAMVMIRDILMYMDRVYVQQNNVENVYNLGLIIFRDQVVRYGCIRDHLRQTLLDMIARERKGEVVDRGAIRNACQMLMILGLEGRSVYEEDFEAPFLEMSAEFFQMESQKFLAENSASVYIKKVEARINEEIERVMHCLDKSTEEPIVKVVERELISKHMKTIVEMENSGLVHMLKNGKTEDLACMYKLFSRVPNGLKTMCECMSSYLREQGKALVSEEGEGKNPVDYIQGLLDLKSRFDRFLQESFNNDRLFKQTIAGDFEYFLNLNSRSPEYLSLFIDDKLKKGVKGLTEQEVETILDKAMVLFRFMQEKDVFERYYKQHLARRLLTNKSVSDDSEKNMISKLKTECGCQFTSKLEGMFRDMSISNTTMDEFRQHLQATGVSLGGVDLTVRVLTTGYWPTQSATPKCNIPPAPRHAFEIFRRFYLAKHSGRQLTLQHHMGSADLNATFYGPVKKEDGSEVGVGGAQVTGSNTRKHILQVSTFQMTILMLFNNREKYTFEEIQQETDIPERELVRALQSLACGKPTQRVLTKEPKSKEIESGHIFTVNDQFTSKLHRVKIQTVAAKQGESDPERKETRQKVDDDRKHEIEAAIVRIMKSRKKMQHNVLVAEVTQQLKARFLPSPVVIKKRIEGLIEREYLARTPEDRKVYTYVA</sequence>
<keyword id="KW-0007">Acetylation</keyword>
<keyword id="KW-0131">Cell cycle</keyword>
<keyword id="KW-0132">Cell division</keyword>
<keyword id="KW-0966">Cell projection</keyword>
<keyword id="KW-0969">Cilium</keyword>
<keyword id="KW-0970">Cilium biogenesis/degradation</keyword>
<keyword id="KW-0963">Cytoplasm</keyword>
<keyword id="KW-0206">Cytoskeleton</keyword>
<keyword id="KW-0931">ER-Golgi transport</keyword>
<keyword id="KW-0282">Flagellum</keyword>
<keyword id="KW-0333">Golgi apparatus</keyword>
<keyword id="KW-1017">Isopeptide bond</keyword>
<keyword id="KW-0498">Mitosis</keyword>
<keyword id="KW-0539">Nucleus</keyword>
<keyword id="KW-0597">Phosphoprotein</keyword>
<keyword id="KW-1185">Reference proteome</keyword>
<keyword id="KW-0813">Transport</keyword>
<keyword id="KW-0832">Ubl conjugation</keyword>
<keyword id="KW-0833">Ubl conjugation pathway</keyword>
<gene>
    <name type="primary">Cul3</name>
</gene>
<comment type="function">
    <text evidence="2">Core component of multiple cullin-RING-based BCR (BTB-CUL3-RBX1) E3 ubiquitin-protein ligase complexes which mediate the ubiquitination and subsequent proteasomal degradation of target proteins. BCR complexes and ARIH1 collaborate in tandem to mediate ubiquitination of target proteins. As a scaffold protein may contribute to catalysis through positioning of the substrate and the ubiquitin-conjugating enzyme. The E3 ubiquitin-protein ligase activity of the complex is dependent on the neddylation of the cullin subunit and is inhibited by the association of the deneddylated cullin subunit with TIP120A/CAND1. The functional specificity of the BCR complex depends on the BTB domain-containing protein as the substrate recognition component. BCR(KLHL42) is involved in ubiquitination of KATNA1. BCR(SPOP) is involved in ubiquitination of BMI1/PCGF4, BRMS1, MACROH2A1 and DAXX, GLI2 and GLI3. Can also form a cullin-RING-based BCR (BTB-CUL3-RBX1) E3 ubiquitin-protein ligase complex containing homodimeric SPOPL or the heterodimer formed by SPOP and SPOPL; these complexes have lower ubiquitin ligase activity. BCR(KLHL9-KLHL13) controls the dynamic behavior of AURKB on mitotic chromosomes and thereby coordinates faithful mitotic progression and completion of cytokinesis. BCR(KLHL12) is involved in ER-Golgi transport by regulating the size of COPII coats, thereby playing a key role in collagen export, which is required for embryonic stem (ES) cells division: BCR(KLHL12) acts by mediating monoubiquitination of SEC31 (SEC31A or SEC31B). BCR(KLHL3) acts as a regulator of ion transport in the distal nephron; by mediating ubiquitination of WNK4. The BCR(KLHL20) E3 ubiquitin ligase complex is involved in interferon response and anterograde Golgi to endosome transport: it mediates both ubiquitination leading to degradation and 'Lys-33'-linked ubiquitination. The BCR(KLHL21) E3 ubiquitin ligase complex regulates localization of the chromosomal passenger complex (CPC) from chromosomes to the spindle midzone in anaphase and mediates the ubiquitination of AURKB. The BCR(KLHL22) ubiquitin ligase complex mediates monoubiquitination of PLK1, leading to PLK1 dissociation from phosphoreceptor proteins and subsequent removal from kinetochores, allowing silencing of the spindle assembly checkpoint (SAC) and chromosome segregation. The BCR(KLHL22) ubiquitin ligase complex is also responsible for the amino acid-stimulated 'Lys-48' polyubiquitination and proteasomal degradation of DEPDC5. Through the degradation of DEPDC5, releases the GATOR1 complex-mediated inhibition of the TORC1 pathway. The BCR(KLHL25) ubiquitin ligase complex is involved in translational homeostasis by mediating ubiquitination and subsequent degradation of hypophosphorylated EIF4EBP1 (4E-BP1). The BCR(KLHL25) ubiquitin ligase complex is also involved in lipid synthesis by mediating ubiquitination and degradation of ACLY. The BCR(KBTBD8) complex acts by mediating monoubiquitination of NOLC1 and TCOF1, leading to remodel the translational program of differentiating cells in favor of neural crest specification. Involved in ubiquitination of cyclin E and of cyclin D1 (in vitro) thus involved in regulation of G1/S transition. Involved in the ubiquitination of KEAP1, ENC1 and KLHL41. In concert with ATF2 and RBX1, promotes degradation of KAT5 thereby attenuating its ability to acetylate and activate ATM. The BCR(KCTD17) E3 ubiquitin ligase complex mediates ubiquitination and degradation of TCHP, a down-regulator of cilium assembly, thereby inducing ciliogenesis. The BCR(KLHL24) E3 ubiquitin ligase complex mediates ubiquitination of KRT14, controls KRT14 levels during keratinocytes differentiation, and is essential for skin integrity. The BCR(KLHL18) E3 ubiquitin ligase complex mediates the ubiquitination of AURKA leading to its activation at the centrosome which is required for initiating mitotic entry. The BCR(KEAP1) E3 ubiquitin ligase complex acts as a key sensor of oxidative and electrophilic stress by mediating ubiquitination and degradation of NFE2L2/NRF2, a transcription factor regulating expression of many cytoprotective genes. As part of the CUL3(KBTBD6/7) E3 ubiquitin ligase complex functions mediates 'Lys-48' ubiquitination and proteasomal degradation of TIAM1. By controlling the ubiquitination of that RAC1 guanine exchange factors (GEF), regulates RAC1 signal transduction and downstream biological processes including the organization of the cytoskeleton, cell migration and cell proliferation. The BCR(KBTBD4) E3 ubiquitin ligase complex targets CoREST corepressor complex components RCOR1, KDM1A/LSD1 and HDAC2 for proteasomal degradation with RCOR1 likely to be the primary target while degradation of KDM1A and HDAC2 is likely due to their association with RCOR1 (By similarity). It also targets RCOR3, MIER2 and MIER3 for proteasomal degradation as well as associated proteins ZNF217 and RREB1 with degradation being dependent on the presence of an ELM2 domain in the target proteins (By similarity). The BCR(ARMC5) complex mediates premature transcription termination of transcripts that are unfavorably configured for transcriptional elongation by mediating ubiquitination of Pol II subunit POLR2A (By similarity). Required for 'Lys-63'-linked ubiquitination of large ribosomal subunit protein MRPL12 (By similarity).</text>
</comment>
<comment type="pathway">
    <text>Protein modification; protein ubiquitination.</text>
</comment>
<comment type="subunit">
    <text evidence="2 6">Forms neddylation-dependent homodimers (By similarity). Component of multiple BCR (BTB-CUL3-RBX1) E3 ubiquitin-protein ligase complexes formed of CUL3, RBX1 and a variable BTB domain-containing protein acting as both, adapter to cullin and substrate recognition subunit (By similarity). The BCR complex may be active as a heterodimeric complex, in which NEDD8, covalently attached to one CUL3 molecule, binds to the C-terminus of a second CUL3 molecule (By similarity). Interacts with RBX1, RNF7, CYCE and TIP120A/CAND1 (By similarity). Part of the BCR(SPOP) containing SPOP, and of BCR containing homodimeric SPOPL or the heterodimer formed by SPOP and SPOPL (By similarity). Part of the probable BCR(KLHL9-KLHL13) complex with BTB domain proteins KLHL9 and KLHL13 (By similarity). Part of the BCR(KLHL41) complex containing KLHL41 (By similarity). Component of the BCR(KLHL12) E3 ubiquitin ligase complex, at least composed of CUL3 and KLHL12 and RBX1 (By similarity). Component of the BCR(KLHL3) E3 ubiquitin ligase complex, at least composed of CUL3 and KLHL3 and RBX1 (By similarity). Part of the BCR(ENC1) complex containing ENC1 (By similarity). Part of a complex consisting of BMI1/PCGF4, CUL3 and SPOP (By similarity). Part of a complex consisting of BRMS1, CUL3 and SPOP (By similarity). Component of the BCR(KLHL21) E3 ubiquitin ligase complex, at least composed of CUL3, KLHL21 and RBX1 (By similarity). Component of the BCR(KLHL22) E3 ubiquitin ligase complex, at least composed of CUL3, KLHL22 and RBX1 (By similarity). Component of the BCR(KLHL25) E3 ubiquitin ligase complex, at least composed of CUL3, KLHL25 and RBX1 (By similarity). Part of a complex consisting of MACROH2A1, CUL3 and SPOP (By similarity). Component of the BCR(KLHL42) E3 ubiquitin ligase complex, at least composed of CUL3 and KLHL42 (By similarity). Component of the BCR(KBTBD8) E3 ubiquitin ligase complex, at least composed of CUL3, KBTBD8 and RBX1 (By similarity). Interacts with KLHL42 (via the BTB domain) (By similarity). Interacts with KATNA1; the interaction is enhanced by KLHL42 (By similarity). Interacts with KCTD5, KLHL9, KLHL11, KLHL13, GAN, ZBTB16, KLHL3, KLHL15, KLHL20, KLHL36, GMCL2, BTBD1 (By similarity). Part of a complex that contains CUL3, RBX1 and GAN (By similarity). Interacts (via BTB domain) with KLHL17; the interaction regulates surface GRIK2 expression (By similarity). Interacts with KCTD7 (By similarity). Part of the BCR(GAN) complex containing GAN (By similarity). Part of the BCR(KEAP1) complex containing KEAP1 (By similarity). vInteracts with KLHL10 (By similarity). Interacts with KAT5 and ATF2 (By similarity). Interacts with KCTD17 in the BCR(KCTD17) E3 ubiquitin ligase complex, at least composed of CUL3, KCTD17 and RBX1 (By similarity). Interacts (when neddylated) with ARIH1; leading to activate the E3 ligase activity of ARIH1 (By similarity). Interacts with COPS9 (By similarity). Interacts with PPP2R5B; this interaction is indirect and mediated through KLHL15-binding and leads to PPP2R5B proteasomal degradation (By similarity). Interacts with RBBP8/CtIP; this interaction is indirect and mediated through KLHL15-binding and leads to RBBP8 proteasomal degradation (By similarity). Interacts with KLHL24 in the BCR(KLHL24) E3 ubiquitin ligase complex, composed of CUL3, RBX1 and KLHL24 (By similarity). Interacts with RHOBTB2 (By similarity). Interacts (via BTB domain) with KLHL17; the interaction regulates surface GRIK2 expression (PubMed:17062563). Interacts with AURKA and KLHL18 (via BTB domain) (By similarity). Interacts (unneddylated form) with DCUN1D1, DCUN1D2, DCUN1D3, DCUN1D4 and DCUN1D5; these interactions promote the cullin neddylation (By similarity). Component of a BCR3 (BTB-CUL3-RBX1) E3 ubiquitin ligase complex, also named Cul3-RING ubiquitin ligase complex CUL3(KBTBD6/7), composed of CUL3, RBX1, KBTBD6 and KBTBD7 (By similarity). Component of the BCR(KBTBD2) E3 ubiquitin ligase complex, at least composed of CUL3, KBTBD2 and RBX1. Interacts with KBTBD2 (via the BTB domain) (By similarity). Component of the BCR(KBTBD4) E3 ubiquitin ligase complex, at least composed of CUL3, KBTBD4 and RBX1 (By similarity).</text>
</comment>
<comment type="subcellular location">
    <subcellularLocation>
        <location evidence="2">Nucleus</location>
    </subcellularLocation>
    <subcellularLocation>
        <location evidence="2">Golgi apparatus</location>
    </subcellularLocation>
    <subcellularLocation>
        <location evidence="2">Cell projection</location>
        <location evidence="2">Cilium</location>
        <location evidence="2">Flagellum</location>
    </subcellularLocation>
    <subcellularLocation>
        <location evidence="2">Cytoplasm</location>
    </subcellularLocation>
    <subcellularLocation>
        <location evidence="2">Cytoplasm</location>
        <location evidence="2">Cytoskeleton</location>
        <location evidence="2">Spindle</location>
    </subcellularLocation>
    <subcellularLocation>
        <location>Cytoplasm</location>
    </subcellularLocation>
    <subcellularLocation>
        <location evidence="2">Cytoplasm</location>
        <location evidence="2">Cytoskeleton</location>
        <location evidence="2">Microtubule organizing center</location>
        <location evidence="2">Centrosome</location>
    </subcellularLocation>
    <subcellularLocation>
        <location evidence="2">Cytoplasm</location>
        <location evidence="2">Cytoskeleton</location>
        <location evidence="2">Spindle pole</location>
    </subcellularLocation>
    <text evidence="2">Detected along the length of the sperm flagellum and in the cytoplasm of the germ cells. Predominantly found in the nucleus in interphase cells, found at the centrosome at late G2 or prophase, starts accumulating at the spindle poles in prometaphase and stays on the spindle poles and the mitotic spindle at metaphase.</text>
</comment>
<comment type="PTM">
    <text evidence="2">Neddylated. Attachment of NEDD8 is required for the E3 ubiquitin-protein ligase activity of the BCR complex. Deneddylated via its interaction with the COP9 signalosome (CSN) complex.</text>
</comment>
<comment type="similarity">
    <text evidence="4">Belongs to the cullin family.</text>
</comment>
<comment type="sequence caution" evidence="7">
    <conflict type="erroneous initiation">
        <sequence resource="EMBL-CDS" id="AAI68969"/>
    </conflict>
    <text>Truncated N-terminus.</text>
</comment>